<protein>
    <recommendedName>
        <fullName evidence="1">Acetyl-coenzyme A carboxylase carboxyl transferase subunit beta</fullName>
        <shortName evidence="1">ACCase subunit beta</shortName>
        <shortName evidence="1">Acetyl-CoA carboxylase carboxyltransferase subunit beta</shortName>
        <ecNumber evidence="1">2.1.3.15</ecNumber>
    </recommendedName>
</protein>
<sequence length="264" mass="29158">MDGLWVKCKQCQQILLTKELEKNLKVCRCGYHFRMTAQERIVMLVDENSFIEWDRELVSKDPLQFPGYAQKIQKCQIETSMSEAITTGQGRICDIPVVLGVMDPRFIMASMGAVVGEKIVRAAERALKLRLPLVLFSASGGARMQEGVLSLMQMARTSAALTRLSKAGLPFFSVLTDPTTGGVTASFAMLGDLIIAEPGALIGFTGPRVIEQTIRQKLPEGFQRSEFLQKHGMVDIIIERPKMREQLAALLALHCGNSLEGVES</sequence>
<accession>B0TI33</accession>
<comment type="function">
    <text evidence="1">Component of the acetyl coenzyme A carboxylase (ACC) complex. Biotin carboxylase (BC) catalyzes the carboxylation of biotin on its carrier protein (BCCP) and then the CO(2) group is transferred by the transcarboxylase to acetyl-CoA to form malonyl-CoA.</text>
</comment>
<comment type="catalytic activity">
    <reaction evidence="1">
        <text>N(6)-carboxybiotinyl-L-lysyl-[protein] + acetyl-CoA = N(6)-biotinyl-L-lysyl-[protein] + malonyl-CoA</text>
        <dbReference type="Rhea" id="RHEA:54728"/>
        <dbReference type="Rhea" id="RHEA-COMP:10505"/>
        <dbReference type="Rhea" id="RHEA-COMP:10506"/>
        <dbReference type="ChEBI" id="CHEBI:57288"/>
        <dbReference type="ChEBI" id="CHEBI:57384"/>
        <dbReference type="ChEBI" id="CHEBI:83144"/>
        <dbReference type="ChEBI" id="CHEBI:83145"/>
        <dbReference type="EC" id="2.1.3.15"/>
    </reaction>
</comment>
<comment type="cofactor">
    <cofactor evidence="1">
        <name>Zn(2+)</name>
        <dbReference type="ChEBI" id="CHEBI:29105"/>
    </cofactor>
    <text evidence="1">Binds 1 zinc ion per subunit.</text>
</comment>
<comment type="pathway">
    <text evidence="1">Lipid metabolism; malonyl-CoA biosynthesis; malonyl-CoA from acetyl-CoA: step 1/1.</text>
</comment>
<comment type="subunit">
    <text evidence="1">Acetyl-CoA carboxylase is a heterohexamer composed of biotin carboxyl carrier protein (AccB), biotin carboxylase (AccC) and two subunits each of ACCase subunit alpha (AccA) and ACCase subunit beta (AccD).</text>
</comment>
<comment type="subcellular location">
    <subcellularLocation>
        <location evidence="1">Cytoplasm</location>
    </subcellularLocation>
</comment>
<comment type="similarity">
    <text evidence="1">Belongs to the AccD/PCCB family.</text>
</comment>
<name>ACCD_HELMI</name>
<feature type="chain" id="PRO_0000389754" description="Acetyl-coenzyme A carboxylase carboxyl transferase subunit beta">
    <location>
        <begin position="1"/>
        <end position="264"/>
    </location>
</feature>
<feature type="domain" description="CoA carboxyltransferase N-terminal" evidence="2">
    <location>
        <begin position="4"/>
        <end position="264"/>
    </location>
</feature>
<feature type="zinc finger region" description="C4-type" evidence="1">
    <location>
        <begin position="8"/>
        <end position="29"/>
    </location>
</feature>
<feature type="binding site" evidence="1">
    <location>
        <position position="8"/>
    </location>
    <ligand>
        <name>Zn(2+)</name>
        <dbReference type="ChEBI" id="CHEBI:29105"/>
    </ligand>
</feature>
<feature type="binding site" evidence="1">
    <location>
        <position position="11"/>
    </location>
    <ligand>
        <name>Zn(2+)</name>
        <dbReference type="ChEBI" id="CHEBI:29105"/>
    </ligand>
</feature>
<feature type="binding site" evidence="1">
    <location>
        <position position="27"/>
    </location>
    <ligand>
        <name>Zn(2+)</name>
        <dbReference type="ChEBI" id="CHEBI:29105"/>
    </ligand>
</feature>
<feature type="binding site" evidence="1">
    <location>
        <position position="29"/>
    </location>
    <ligand>
        <name>Zn(2+)</name>
        <dbReference type="ChEBI" id="CHEBI:29105"/>
    </ligand>
</feature>
<reference key="1">
    <citation type="journal article" date="2008" name="J. Bacteriol.">
        <title>The genome of Heliobacterium modesticaldum, a phototrophic representative of the Firmicutes containing the simplest photosynthetic apparatus.</title>
        <authorList>
            <person name="Sattley W.M."/>
            <person name="Madigan M.T."/>
            <person name="Swingley W.D."/>
            <person name="Cheung P.C."/>
            <person name="Clocksin K.M."/>
            <person name="Conrad A.L."/>
            <person name="Dejesa L.C."/>
            <person name="Honchak B.M."/>
            <person name="Jung D.O."/>
            <person name="Karbach L.E."/>
            <person name="Kurdoglu A."/>
            <person name="Lahiri S."/>
            <person name="Mastrian S.D."/>
            <person name="Page L.E."/>
            <person name="Taylor H.L."/>
            <person name="Wang Z.T."/>
            <person name="Raymond J."/>
            <person name="Chen M."/>
            <person name="Blankenship R.E."/>
            <person name="Touchman J.W."/>
        </authorList>
    </citation>
    <scope>NUCLEOTIDE SEQUENCE [LARGE SCALE GENOMIC DNA]</scope>
    <source>
        <strain>ATCC 51547 / Ice1</strain>
    </source>
</reference>
<proteinExistence type="inferred from homology"/>
<dbReference type="EC" id="2.1.3.15" evidence="1"/>
<dbReference type="EMBL" id="CP000930">
    <property type="protein sequence ID" value="ABZ82706.1"/>
    <property type="molecule type" value="Genomic_DNA"/>
</dbReference>
<dbReference type="RefSeq" id="WP_012281255.1">
    <property type="nucleotide sequence ID" value="NC_010337.2"/>
</dbReference>
<dbReference type="SMR" id="B0TI33"/>
<dbReference type="STRING" id="498761.HM1_0081"/>
<dbReference type="KEGG" id="hmo:HM1_0081"/>
<dbReference type="eggNOG" id="COG0777">
    <property type="taxonomic scope" value="Bacteria"/>
</dbReference>
<dbReference type="HOGENOM" id="CLU_015486_1_1_9"/>
<dbReference type="UniPathway" id="UPA00655">
    <property type="reaction ID" value="UER00711"/>
</dbReference>
<dbReference type="Proteomes" id="UP000008550">
    <property type="component" value="Chromosome"/>
</dbReference>
<dbReference type="GO" id="GO:0009317">
    <property type="term" value="C:acetyl-CoA carboxylase complex"/>
    <property type="evidence" value="ECO:0007669"/>
    <property type="project" value="InterPro"/>
</dbReference>
<dbReference type="GO" id="GO:0003989">
    <property type="term" value="F:acetyl-CoA carboxylase activity"/>
    <property type="evidence" value="ECO:0007669"/>
    <property type="project" value="InterPro"/>
</dbReference>
<dbReference type="GO" id="GO:0005524">
    <property type="term" value="F:ATP binding"/>
    <property type="evidence" value="ECO:0007669"/>
    <property type="project" value="UniProtKB-KW"/>
</dbReference>
<dbReference type="GO" id="GO:0016743">
    <property type="term" value="F:carboxyl- or carbamoyltransferase activity"/>
    <property type="evidence" value="ECO:0007669"/>
    <property type="project" value="UniProtKB-UniRule"/>
</dbReference>
<dbReference type="GO" id="GO:0008270">
    <property type="term" value="F:zinc ion binding"/>
    <property type="evidence" value="ECO:0007669"/>
    <property type="project" value="UniProtKB-UniRule"/>
</dbReference>
<dbReference type="GO" id="GO:0006633">
    <property type="term" value="P:fatty acid biosynthetic process"/>
    <property type="evidence" value="ECO:0007669"/>
    <property type="project" value="UniProtKB-KW"/>
</dbReference>
<dbReference type="GO" id="GO:2001295">
    <property type="term" value="P:malonyl-CoA biosynthetic process"/>
    <property type="evidence" value="ECO:0007669"/>
    <property type="project" value="UniProtKB-UniRule"/>
</dbReference>
<dbReference type="Gene3D" id="3.90.226.10">
    <property type="entry name" value="2-enoyl-CoA Hydratase, Chain A, domain 1"/>
    <property type="match status" value="1"/>
</dbReference>
<dbReference type="HAMAP" id="MF_01395">
    <property type="entry name" value="AcetylCoA_CT_beta"/>
    <property type="match status" value="1"/>
</dbReference>
<dbReference type="InterPro" id="IPR034733">
    <property type="entry name" value="AcCoA_carboxyl_beta"/>
</dbReference>
<dbReference type="InterPro" id="IPR000438">
    <property type="entry name" value="Acetyl_CoA_COase_Trfase_b_su"/>
</dbReference>
<dbReference type="InterPro" id="IPR029045">
    <property type="entry name" value="ClpP/crotonase-like_dom_sf"/>
</dbReference>
<dbReference type="InterPro" id="IPR011762">
    <property type="entry name" value="COA_CT_N"/>
</dbReference>
<dbReference type="InterPro" id="IPR041010">
    <property type="entry name" value="Znf-ACC"/>
</dbReference>
<dbReference type="NCBIfam" id="TIGR00515">
    <property type="entry name" value="accD"/>
    <property type="match status" value="1"/>
</dbReference>
<dbReference type="PANTHER" id="PTHR42995">
    <property type="entry name" value="ACETYL-COENZYME A CARBOXYLASE CARBOXYL TRANSFERASE SUBUNIT BETA, CHLOROPLASTIC"/>
    <property type="match status" value="1"/>
</dbReference>
<dbReference type="PANTHER" id="PTHR42995:SF5">
    <property type="entry name" value="ACETYL-COENZYME A CARBOXYLASE CARBOXYL TRANSFERASE SUBUNIT BETA, CHLOROPLASTIC"/>
    <property type="match status" value="1"/>
</dbReference>
<dbReference type="Pfam" id="PF01039">
    <property type="entry name" value="Carboxyl_trans"/>
    <property type="match status" value="1"/>
</dbReference>
<dbReference type="Pfam" id="PF17848">
    <property type="entry name" value="Zn_ribbon_ACC"/>
    <property type="match status" value="1"/>
</dbReference>
<dbReference type="PRINTS" id="PR01070">
    <property type="entry name" value="ACCCTRFRASEB"/>
</dbReference>
<dbReference type="SUPFAM" id="SSF52096">
    <property type="entry name" value="ClpP/crotonase"/>
    <property type="match status" value="1"/>
</dbReference>
<dbReference type="PROSITE" id="PS50980">
    <property type="entry name" value="COA_CT_NTER"/>
    <property type="match status" value="1"/>
</dbReference>
<organism>
    <name type="scientific">Heliobacterium modesticaldum (strain ATCC 51547 / Ice1)</name>
    <dbReference type="NCBI Taxonomy" id="498761"/>
    <lineage>
        <taxon>Bacteria</taxon>
        <taxon>Bacillati</taxon>
        <taxon>Bacillota</taxon>
        <taxon>Clostridia</taxon>
        <taxon>Eubacteriales</taxon>
        <taxon>Heliobacteriaceae</taxon>
        <taxon>Heliomicrobium</taxon>
    </lineage>
</organism>
<keyword id="KW-0067">ATP-binding</keyword>
<keyword id="KW-0963">Cytoplasm</keyword>
<keyword id="KW-0275">Fatty acid biosynthesis</keyword>
<keyword id="KW-0276">Fatty acid metabolism</keyword>
<keyword id="KW-0444">Lipid biosynthesis</keyword>
<keyword id="KW-0443">Lipid metabolism</keyword>
<keyword id="KW-0479">Metal-binding</keyword>
<keyword id="KW-0547">Nucleotide-binding</keyword>
<keyword id="KW-1185">Reference proteome</keyword>
<keyword id="KW-0808">Transferase</keyword>
<keyword id="KW-0862">Zinc</keyword>
<keyword id="KW-0863">Zinc-finger</keyword>
<evidence type="ECO:0000255" key="1">
    <source>
        <dbReference type="HAMAP-Rule" id="MF_01395"/>
    </source>
</evidence>
<evidence type="ECO:0000255" key="2">
    <source>
        <dbReference type="PROSITE-ProRule" id="PRU01136"/>
    </source>
</evidence>
<gene>
    <name evidence="1" type="primary">accD</name>
    <name type="ordered locus">Helmi_00810</name>
    <name type="ORF">HM1_0081</name>
</gene>